<reference key="1">
    <citation type="journal article" date="2001" name="Nature">
        <title>Genome sequence and gene compaction of the eukaryote parasite Encephalitozoon cuniculi.</title>
        <authorList>
            <person name="Katinka M.D."/>
            <person name="Duprat S."/>
            <person name="Cornillot E."/>
            <person name="Metenier G."/>
            <person name="Thomarat F."/>
            <person name="Prensier G."/>
            <person name="Barbe V."/>
            <person name="Peyretaillade E."/>
            <person name="Brottier P."/>
            <person name="Wincker P."/>
            <person name="Delbac F."/>
            <person name="El Alaoui H."/>
            <person name="Peyret P."/>
            <person name="Saurin W."/>
            <person name="Gouy M."/>
            <person name="Weissenbach J."/>
            <person name="Vivares C.P."/>
        </authorList>
    </citation>
    <scope>NUCLEOTIDE SEQUENCE [LARGE SCALE GENOMIC DNA]</scope>
    <source>
        <strain>GB-M1</strain>
    </source>
</reference>
<reference key="2">
    <citation type="journal article" date="2009" name="BMC Genomics">
        <title>Identification of transcriptional signals in Encephalitozoon cuniculi widespread among Microsporidia phylum: support for accurate structural genome annotation.</title>
        <authorList>
            <person name="Peyretaillade E."/>
            <person name="Goncalves O."/>
            <person name="Terrat S."/>
            <person name="Dugat-Bony E."/>
            <person name="Wincker P."/>
            <person name="Cornman R.S."/>
            <person name="Evans J.D."/>
            <person name="Delbac F."/>
            <person name="Peyret P."/>
        </authorList>
    </citation>
    <scope>GENOME REANNOTATION</scope>
    <source>
        <strain>GB-M1</strain>
    </source>
</reference>
<dbReference type="EC" id="2.1.1.-"/>
<dbReference type="EMBL" id="AL590451">
    <property type="protein sequence ID" value="CAD27122.2"/>
    <property type="molecule type" value="Genomic_DNA"/>
</dbReference>
<dbReference type="RefSeq" id="NP_001402403.1">
    <property type="nucleotide sequence ID" value="NM_001415463.1"/>
</dbReference>
<dbReference type="RefSeq" id="XP_955703.1">
    <property type="nucleotide sequence ID" value="XM_950610.1"/>
</dbReference>
<dbReference type="SMR" id="Q8STN5"/>
<dbReference type="FunCoup" id="Q8STN5">
    <property type="interactions" value="137"/>
</dbReference>
<dbReference type="STRING" id="284813.Q8STN5"/>
<dbReference type="GeneID" id="860489"/>
<dbReference type="VEuPathDB" id="MicrosporidiaDB:ECU09_1500"/>
<dbReference type="HOGENOM" id="CLU_029501_2_1_1"/>
<dbReference type="InParanoid" id="Q8STN5"/>
<dbReference type="OrthoDB" id="271595at2759"/>
<dbReference type="Proteomes" id="UP000000819">
    <property type="component" value="Chromosome IX"/>
</dbReference>
<dbReference type="GO" id="GO:0008757">
    <property type="term" value="F:S-adenosylmethionine-dependent methyltransferase activity"/>
    <property type="evidence" value="ECO:0007669"/>
    <property type="project" value="InterPro"/>
</dbReference>
<dbReference type="GO" id="GO:0008175">
    <property type="term" value="F:tRNA methyltransferase activity"/>
    <property type="evidence" value="ECO:0007669"/>
    <property type="project" value="UniProtKB-ARBA"/>
</dbReference>
<dbReference type="GO" id="GO:0032259">
    <property type="term" value="P:methylation"/>
    <property type="evidence" value="ECO:0007669"/>
    <property type="project" value="UniProtKB-KW"/>
</dbReference>
<dbReference type="GO" id="GO:0006400">
    <property type="term" value="P:tRNA modification"/>
    <property type="evidence" value="ECO:0007669"/>
    <property type="project" value="UniProtKB-ARBA"/>
</dbReference>
<dbReference type="CDD" id="cd02440">
    <property type="entry name" value="AdoMet_MTases"/>
    <property type="match status" value="1"/>
</dbReference>
<dbReference type="Gene3D" id="3.40.50.150">
    <property type="entry name" value="Vaccinia Virus protein VP39"/>
    <property type="match status" value="1"/>
</dbReference>
<dbReference type="InterPro" id="IPR051422">
    <property type="entry name" value="AlkB_tRNA_MeTrf/Diox"/>
</dbReference>
<dbReference type="InterPro" id="IPR013216">
    <property type="entry name" value="Methyltransf_11"/>
</dbReference>
<dbReference type="InterPro" id="IPR029063">
    <property type="entry name" value="SAM-dependent_MTases_sf"/>
</dbReference>
<dbReference type="PANTHER" id="PTHR13069">
    <property type="entry name" value="ALKYLATED DNA REPAIR PROTEIN ALKB HOMOLOG 8"/>
    <property type="match status" value="1"/>
</dbReference>
<dbReference type="PANTHER" id="PTHR13069:SF21">
    <property type="entry name" value="ALKYLATED DNA REPAIR PROTEIN ALKB HOMOLOG 8"/>
    <property type="match status" value="1"/>
</dbReference>
<dbReference type="Pfam" id="PF08241">
    <property type="entry name" value="Methyltransf_11"/>
    <property type="match status" value="1"/>
</dbReference>
<dbReference type="SUPFAM" id="SSF53335">
    <property type="entry name" value="S-adenosyl-L-methionine-dependent methyltransferases"/>
    <property type="match status" value="1"/>
</dbReference>
<sequence length="210" mass="24052">MDDPSGFEERFVHRFYDENSREFSATRRRHWGMTRRFLDNYYTRESIVLDAGCGNGRSFLVPCMVGMDYCLGLLNDARAAGGQGLVRGDVLELPFVDCSFDLVLSVAVIHHLSTRCRRERAMKEMRRVLKDGGKMLLYVWGSSAKSKRKFSRAAGGSEQDYLATWNLRSDTKRYYHLYGMEGLLELCTDSGFKVLDHGTEEESLFAVLEK</sequence>
<organism>
    <name type="scientific">Encephalitozoon cuniculi (strain GB-M1)</name>
    <name type="common">Microsporidian parasite</name>
    <dbReference type="NCBI Taxonomy" id="284813"/>
    <lineage>
        <taxon>Eukaryota</taxon>
        <taxon>Fungi</taxon>
        <taxon>Fungi incertae sedis</taxon>
        <taxon>Microsporidia</taxon>
        <taxon>Unikaryonidae</taxon>
        <taxon>Encephalitozoon</taxon>
    </lineage>
</organism>
<feature type="chain" id="PRO_0000388432" description="Putative methyltransferase ECU09_1500">
    <location>
        <begin position="1"/>
        <end position="210"/>
    </location>
</feature>
<proteinExistence type="inferred from homology"/>
<evidence type="ECO:0000305" key="1"/>
<name>Y9F0_ENCCU</name>
<comment type="similarity">
    <text evidence="1">Belongs to the methyltransferase superfamily.</text>
</comment>
<accession>Q8STN5</accession>
<keyword id="KW-0489">Methyltransferase</keyword>
<keyword id="KW-1185">Reference proteome</keyword>
<keyword id="KW-0808">Transferase</keyword>
<protein>
    <recommendedName>
        <fullName>Putative methyltransferase ECU09_1500</fullName>
        <ecNumber>2.1.1.-</ecNumber>
    </recommendedName>
</protein>
<gene>
    <name type="ordered locus">ECU09_1500</name>
</gene>